<feature type="signal peptide" evidence="2">
    <location>
        <begin position="1"/>
        <end position="19"/>
    </location>
</feature>
<feature type="chain" id="PRO_0000042117" description="Netrin-4">
    <location>
        <begin position="20"/>
        <end position="628"/>
    </location>
</feature>
<feature type="domain" description="Laminin N-terminal" evidence="5">
    <location>
        <begin position="30"/>
        <end position="261"/>
    </location>
</feature>
<feature type="domain" description="Laminin EGF-like 1" evidence="4">
    <location>
        <begin position="262"/>
        <end position="331"/>
    </location>
</feature>
<feature type="domain" description="Laminin EGF-like 2" evidence="4">
    <location>
        <begin position="332"/>
        <end position="394"/>
    </location>
</feature>
<feature type="domain" description="Laminin EGF-like 3" evidence="4">
    <location>
        <begin position="395"/>
        <end position="448"/>
    </location>
</feature>
<feature type="domain" description="NTR" evidence="3">
    <location>
        <begin position="506"/>
        <end position="627"/>
    </location>
</feature>
<feature type="glycosylation site" description="N-linked (GlcNAc...) asparagine" evidence="2">
    <location>
        <position position="56"/>
    </location>
</feature>
<feature type="glycosylation site" description="N-linked (GlcNAc...) asparagine" evidence="2">
    <location>
        <position position="163"/>
    </location>
</feature>
<feature type="glycosylation site" description="N-linked (GlcNAc...) asparagine" evidence="2">
    <location>
        <position position="353"/>
    </location>
</feature>
<feature type="glycosylation site" description="N-linked (GlcNAc...) asparagine" evidence="2">
    <location>
        <position position="483"/>
    </location>
</feature>
<feature type="disulfide bond" evidence="1">
    <location>
        <begin position="262"/>
        <end position="271"/>
    </location>
</feature>
<feature type="disulfide bond" evidence="1">
    <location>
        <begin position="264"/>
        <end position="293"/>
    </location>
</feature>
<feature type="disulfide bond" evidence="1">
    <location>
        <begin position="295"/>
        <end position="304"/>
    </location>
</feature>
<feature type="disulfide bond" evidence="1">
    <location>
        <begin position="307"/>
        <end position="329"/>
    </location>
</feature>
<feature type="disulfide bond" evidence="1">
    <location>
        <begin position="332"/>
        <end position="341"/>
    </location>
</feature>
<feature type="disulfide bond" evidence="1">
    <location>
        <begin position="334"/>
        <end position="359"/>
    </location>
</feature>
<feature type="disulfide bond" evidence="1">
    <location>
        <begin position="362"/>
        <end position="371"/>
    </location>
</feature>
<feature type="disulfide bond" evidence="1">
    <location>
        <begin position="374"/>
        <end position="392"/>
    </location>
</feature>
<feature type="disulfide bond" evidence="1">
    <location>
        <begin position="395"/>
        <end position="413"/>
    </location>
</feature>
<feature type="disulfide bond" evidence="1">
    <location>
        <begin position="397"/>
        <end position="420"/>
    </location>
</feature>
<feature type="disulfide bond" evidence="1">
    <location>
        <begin position="422"/>
        <end position="431"/>
    </location>
</feature>
<feature type="disulfide bond" evidence="1">
    <location>
        <begin position="434"/>
        <end position="446"/>
    </location>
</feature>
<feature type="disulfide bond" evidence="1">
    <location>
        <begin position="506"/>
        <end position="576"/>
    </location>
</feature>
<feature type="disulfide bond" evidence="1">
    <location>
        <begin position="520"/>
        <end position="627"/>
    </location>
</feature>
<feature type="sequence conflict" description="In Ref. 1; AAF91404 and 2; AAG30823." evidence="8" ref="1 2">
    <original>A</original>
    <variation>T</variation>
    <location>
        <position position="477"/>
    </location>
</feature>
<feature type="turn" evidence="9">
    <location>
        <begin position="41"/>
        <end position="44"/>
    </location>
</feature>
<feature type="strand" evidence="9">
    <location>
        <begin position="47"/>
        <end position="50"/>
    </location>
</feature>
<feature type="strand" evidence="9">
    <location>
        <begin position="53"/>
        <end position="57"/>
    </location>
</feature>
<feature type="strand" evidence="9">
    <location>
        <begin position="59"/>
        <end position="62"/>
    </location>
</feature>
<feature type="strand" evidence="9">
    <location>
        <begin position="77"/>
        <end position="80"/>
    </location>
</feature>
<feature type="turn" evidence="9">
    <location>
        <begin position="85"/>
        <end position="87"/>
    </location>
</feature>
<feature type="helix" evidence="9">
    <location>
        <begin position="91"/>
        <end position="93"/>
    </location>
</feature>
<feature type="strand" evidence="9">
    <location>
        <begin position="94"/>
        <end position="96"/>
    </location>
</feature>
<feature type="strand" evidence="9">
    <location>
        <begin position="115"/>
        <end position="136"/>
    </location>
</feature>
<feature type="strand" evidence="9">
    <location>
        <begin position="140"/>
        <end position="149"/>
    </location>
</feature>
<feature type="strand" evidence="9">
    <location>
        <begin position="155"/>
        <end position="162"/>
    </location>
</feature>
<feature type="helix" evidence="9">
    <location>
        <begin position="164"/>
        <end position="167"/>
    </location>
</feature>
<feature type="helix" evidence="9">
    <location>
        <begin position="173"/>
        <end position="176"/>
    </location>
</feature>
<feature type="strand" evidence="9">
    <location>
        <begin position="180"/>
        <end position="183"/>
    </location>
</feature>
<feature type="strand" evidence="9">
    <location>
        <begin position="190"/>
        <end position="193"/>
    </location>
</feature>
<feature type="strand" evidence="9">
    <location>
        <begin position="195"/>
        <end position="201"/>
    </location>
</feature>
<feature type="helix" evidence="9">
    <location>
        <begin position="203"/>
        <end position="206"/>
    </location>
</feature>
<feature type="helix" evidence="9">
    <location>
        <begin position="213"/>
        <end position="219"/>
    </location>
</feature>
<feature type="strand" evidence="9">
    <location>
        <begin position="220"/>
        <end position="230"/>
    </location>
</feature>
<feature type="strand" evidence="9">
    <location>
        <begin position="252"/>
        <end position="262"/>
    </location>
</feature>
<feature type="strand" evidence="9">
    <location>
        <begin position="299"/>
        <end position="301"/>
    </location>
</feature>
<feature type="turn" evidence="9">
    <location>
        <begin position="321"/>
        <end position="323"/>
    </location>
</feature>
<feature type="strand" evidence="9">
    <location>
        <begin position="341"/>
        <end position="343"/>
    </location>
</feature>
<feature type="helix" evidence="9">
    <location>
        <begin position="345"/>
        <end position="350"/>
    </location>
</feature>
<feature type="strand" evidence="9">
    <location>
        <begin position="357"/>
        <end position="361"/>
    </location>
</feature>
<feature type="strand" evidence="9">
    <location>
        <begin position="378"/>
        <end position="380"/>
    </location>
</feature>
<feature type="helix" evidence="9">
    <location>
        <begin position="389"/>
        <end position="391"/>
    </location>
</feature>
<feature type="strand" evidence="9">
    <location>
        <begin position="392"/>
        <end position="394"/>
    </location>
</feature>
<feature type="turn" evidence="9">
    <location>
        <begin position="399"/>
        <end position="401"/>
    </location>
</feature>
<feature type="turn" evidence="9">
    <location>
        <begin position="415"/>
        <end position="417"/>
    </location>
</feature>
<feature type="strand" evidence="9">
    <location>
        <begin position="426"/>
        <end position="430"/>
    </location>
</feature>
<feature type="strand" evidence="9">
    <location>
        <begin position="438"/>
        <end position="442"/>
    </location>
</feature>
<feature type="strand" evidence="9">
    <location>
        <begin position="445"/>
        <end position="448"/>
    </location>
</feature>
<feature type="turn" evidence="9">
    <location>
        <begin position="457"/>
        <end position="459"/>
    </location>
</feature>
<gene>
    <name type="primary">Ntn4</name>
</gene>
<keyword id="KW-0002">3D-structure</keyword>
<keyword id="KW-0084">Basement membrane</keyword>
<keyword id="KW-1015">Disulfide bond</keyword>
<keyword id="KW-0272">Extracellular matrix</keyword>
<keyword id="KW-0325">Glycoprotein</keyword>
<keyword id="KW-0424">Laminin EGF-like domain</keyword>
<keyword id="KW-1185">Reference proteome</keyword>
<keyword id="KW-0677">Repeat</keyword>
<keyword id="KW-0964">Secreted</keyword>
<keyword id="KW-0732">Signal</keyword>
<reference key="1">
    <citation type="journal article" date="2000" name="Mech. Dev.">
        <title>Identification and expression of mouse netrin-4.</title>
        <authorList>
            <person name="Yin Y."/>
            <person name="Sanes J.R."/>
            <person name="Miner J.H."/>
        </authorList>
    </citation>
    <scope>NUCLEOTIDE SEQUENCE [MRNA]</scope>
    <scope>TISSUE SPECIFICITY</scope>
    <source>
        <strain>ICR</strain>
    </source>
</reference>
<reference key="2">
    <citation type="journal article" date="2000" name="J. Cell Biol.">
        <title>A novel member of the netrin family, beta-netrin, shares homology with the beta chain of laminin. Identification, expression, and functional characterization.</title>
        <authorList>
            <person name="Koch M."/>
            <person name="Murrell J.R."/>
            <person name="Hunter D.D."/>
            <person name="Olson P.F."/>
            <person name="Jin W."/>
            <person name="Keene D.R."/>
            <person name="Brunken W.J."/>
            <person name="Burgeson R.E."/>
        </authorList>
    </citation>
    <scope>NUCLEOTIDE SEQUENCE [MRNA]</scope>
    <scope>FUNCTION</scope>
    <scope>TISSUE SPECIFICITY</scope>
    <source>
        <strain>BALB/cJ</strain>
    </source>
</reference>
<reference key="3">
    <citation type="journal article" date="2009" name="PLoS Biol.">
        <title>Lineage-specific biology revealed by a finished genome assembly of the mouse.</title>
        <authorList>
            <person name="Church D.M."/>
            <person name="Goodstadt L."/>
            <person name="Hillier L.W."/>
            <person name="Zody M.C."/>
            <person name="Goldstein S."/>
            <person name="She X."/>
            <person name="Bult C.J."/>
            <person name="Agarwala R."/>
            <person name="Cherry J.L."/>
            <person name="DiCuccio M."/>
            <person name="Hlavina W."/>
            <person name="Kapustin Y."/>
            <person name="Meric P."/>
            <person name="Maglott D."/>
            <person name="Birtle Z."/>
            <person name="Marques A.C."/>
            <person name="Graves T."/>
            <person name="Zhou S."/>
            <person name="Teague B."/>
            <person name="Potamousis K."/>
            <person name="Churas C."/>
            <person name="Place M."/>
            <person name="Herschleb J."/>
            <person name="Runnheim R."/>
            <person name="Forrest D."/>
            <person name="Amos-Landgraf J."/>
            <person name="Schwartz D.C."/>
            <person name="Cheng Z."/>
            <person name="Lindblad-Toh K."/>
            <person name="Eichler E.E."/>
            <person name="Ponting C.P."/>
        </authorList>
    </citation>
    <scope>NUCLEOTIDE SEQUENCE [LARGE SCALE GENOMIC DNA]</scope>
    <source>
        <strain>C57BL/6J</strain>
    </source>
</reference>
<sequence length="628" mass="69867">MGSCARLLLLWGCSAVAAGLNGVAGANSRCEKACNPRMGNLALGRKLRADTMCGQNATELFCFYSENADLTCRQPKCDKCNAAHSHLAHPPSAMADSSFRFPRTWWQSAEDVHREKIQLDLEAEFYFTHLIMVFKSPRPAAMVLDRSQDFGKTWKPYKYFATNCSATFGLEDDVVKKGAICTSRYSNPFPCTGGEVIFRALSPPYDIENPYSAKVQEQLKITNLRVRLLKRQSCPCQINDLNAKPHHFMHYAVYDFIVKGSCFCNGHADQCLPVEGFRPIKAPGAFHVVHGRCMCKHNTAGSHCQHCAPLYNDRPWEAADGRTGAPNECRTCKCNGHADTCHFDVNVWEASGNRSGGVCNNCQHNTEGQHCQRCKPGFYRDLRRPFSAPDACKACSCHPVGSAILPFSSVTFCDPSNGDCPCKPGVAGPHCDRCMVGYWGFGDYGCRPCDCAGSCDPLTGDCISSNADVDWYHEVPAFHSMHNKSEPSWEWEDEQGFSALRHSGKCECKEQVLGNPKAFCGMKYSYVLKIKILSAHDKGSHAEVNVKIKKVLKSTKLKILRGKRTLYPESWTNRGCTCPILNPGLEYLVAGHEDVRTGKLIVNMKSFVQHWKPALGRRVMHILKRDCV</sequence>
<evidence type="ECO:0000250" key="1"/>
<evidence type="ECO:0000255" key="2"/>
<evidence type="ECO:0000255" key="3">
    <source>
        <dbReference type="PROSITE-ProRule" id="PRU00295"/>
    </source>
</evidence>
<evidence type="ECO:0000255" key="4">
    <source>
        <dbReference type="PROSITE-ProRule" id="PRU00460"/>
    </source>
</evidence>
<evidence type="ECO:0000255" key="5">
    <source>
        <dbReference type="PROSITE-ProRule" id="PRU00466"/>
    </source>
</evidence>
<evidence type="ECO:0000269" key="6">
    <source>
    </source>
</evidence>
<evidence type="ECO:0000269" key="7">
    <source>
    </source>
</evidence>
<evidence type="ECO:0000305" key="8"/>
<evidence type="ECO:0007829" key="9">
    <source>
        <dbReference type="PDB" id="4WNX"/>
    </source>
</evidence>
<dbReference type="EMBL" id="AF268066">
    <property type="protein sequence ID" value="AAF91404.1"/>
    <property type="molecule type" value="mRNA"/>
</dbReference>
<dbReference type="EMBL" id="AF281278">
    <property type="protein sequence ID" value="AAG30823.1"/>
    <property type="molecule type" value="mRNA"/>
</dbReference>
<dbReference type="EMBL" id="AC124585">
    <property type="status" value="NOT_ANNOTATED_CDS"/>
    <property type="molecule type" value="Genomic_DNA"/>
</dbReference>
<dbReference type="EMBL" id="AC151976">
    <property type="status" value="NOT_ANNOTATED_CDS"/>
    <property type="molecule type" value="Genomic_DNA"/>
</dbReference>
<dbReference type="CCDS" id="CCDS24128.1"/>
<dbReference type="RefSeq" id="NP_067295.2">
    <property type="nucleotide sequence ID" value="NM_021320.3"/>
</dbReference>
<dbReference type="PDB" id="4WNX">
    <property type="method" value="X-ray"/>
    <property type="resolution" value="2.72 A"/>
    <property type="chains" value="A=30-462"/>
</dbReference>
<dbReference type="PDBsum" id="4WNX"/>
<dbReference type="SMR" id="Q9JI33"/>
<dbReference type="BioGRID" id="208320">
    <property type="interactions" value="3"/>
</dbReference>
<dbReference type="DIP" id="DIP-60741N"/>
<dbReference type="FunCoup" id="Q9JI33">
    <property type="interactions" value="104"/>
</dbReference>
<dbReference type="IntAct" id="Q9JI33">
    <property type="interactions" value="4"/>
</dbReference>
<dbReference type="STRING" id="10090.ENSMUSP00000020204"/>
<dbReference type="GlyCosmos" id="Q9JI33">
    <property type="glycosylation" value="4 sites, No reported glycans"/>
</dbReference>
<dbReference type="GlyGen" id="Q9JI33">
    <property type="glycosylation" value="4 sites, 1 N-linked glycan (1 site)"/>
</dbReference>
<dbReference type="PhosphoSitePlus" id="Q9JI33"/>
<dbReference type="PaxDb" id="10090-ENSMUSP00000020204"/>
<dbReference type="ProteomicsDB" id="287379"/>
<dbReference type="Antibodypedia" id="30131">
    <property type="antibodies" value="203 antibodies from 27 providers"/>
</dbReference>
<dbReference type="DNASU" id="57764"/>
<dbReference type="Ensembl" id="ENSMUST00000020204.5">
    <property type="protein sequence ID" value="ENSMUSP00000020204.5"/>
    <property type="gene ID" value="ENSMUSG00000020019.5"/>
</dbReference>
<dbReference type="GeneID" id="57764"/>
<dbReference type="KEGG" id="mmu:57764"/>
<dbReference type="UCSC" id="uc007gux.2">
    <property type="organism name" value="mouse"/>
</dbReference>
<dbReference type="AGR" id="MGI:1888978"/>
<dbReference type="CTD" id="59277"/>
<dbReference type="MGI" id="MGI:1888978">
    <property type="gene designation" value="Ntn4"/>
</dbReference>
<dbReference type="VEuPathDB" id="HostDB:ENSMUSG00000020019"/>
<dbReference type="eggNOG" id="KOG0994">
    <property type="taxonomic scope" value="Eukaryota"/>
</dbReference>
<dbReference type="GeneTree" id="ENSGT00940000156615"/>
<dbReference type="HOGENOM" id="CLU_016961_2_1_1"/>
<dbReference type="InParanoid" id="Q9JI33"/>
<dbReference type="OMA" id="WAWEDEQ"/>
<dbReference type="OrthoDB" id="9855268at2759"/>
<dbReference type="PhylomeDB" id="Q9JI33"/>
<dbReference type="TreeFam" id="TF352481"/>
<dbReference type="Reactome" id="R-MMU-373752">
    <property type="pathway name" value="Netrin-1 signaling"/>
</dbReference>
<dbReference type="BioGRID-ORCS" id="57764">
    <property type="hits" value="3 hits in 78 CRISPR screens"/>
</dbReference>
<dbReference type="ChiTaRS" id="Ntn4">
    <property type="organism name" value="mouse"/>
</dbReference>
<dbReference type="PRO" id="PR:Q9JI33"/>
<dbReference type="Proteomes" id="UP000000589">
    <property type="component" value="Chromosome 10"/>
</dbReference>
<dbReference type="RNAct" id="Q9JI33">
    <property type="molecule type" value="protein"/>
</dbReference>
<dbReference type="Bgee" id="ENSMUSG00000020019">
    <property type="expression patterns" value="Expressed in pigmented layer of retina and 199 other cell types or tissues"/>
</dbReference>
<dbReference type="ExpressionAtlas" id="Q9JI33">
    <property type="expression patterns" value="baseline and differential"/>
</dbReference>
<dbReference type="GO" id="GO:0005604">
    <property type="term" value="C:basement membrane"/>
    <property type="evidence" value="ECO:0000314"/>
    <property type="project" value="MGI"/>
</dbReference>
<dbReference type="GO" id="GO:0005576">
    <property type="term" value="C:extracellular region"/>
    <property type="evidence" value="ECO:0007669"/>
    <property type="project" value="UniProtKB-KW"/>
</dbReference>
<dbReference type="GO" id="GO:0005886">
    <property type="term" value="C:plasma membrane"/>
    <property type="evidence" value="ECO:0000304"/>
    <property type="project" value="Reactome"/>
</dbReference>
<dbReference type="GO" id="GO:0043237">
    <property type="term" value="F:laminin-1 binding"/>
    <property type="evidence" value="ECO:0000314"/>
    <property type="project" value="MGI"/>
</dbReference>
<dbReference type="GO" id="GO:0016322">
    <property type="term" value="P:neuron remodeling"/>
    <property type="evidence" value="ECO:0000314"/>
    <property type="project" value="MGI"/>
</dbReference>
<dbReference type="GO" id="GO:0060668">
    <property type="term" value="P:regulation of branching involved in salivary gland morphogenesis by extracellular matrix-epithelial cell signaling"/>
    <property type="evidence" value="ECO:0000314"/>
    <property type="project" value="MGI"/>
</dbReference>
<dbReference type="CDD" id="cd00055">
    <property type="entry name" value="EGF_Lam"/>
    <property type="match status" value="3"/>
</dbReference>
<dbReference type="CDD" id="cd03578">
    <property type="entry name" value="NTR_netrin-4_like"/>
    <property type="match status" value="1"/>
</dbReference>
<dbReference type="FunFam" id="2.170.300.10:FF:000001">
    <property type="entry name" value="Laminin subunit beta-1"/>
    <property type="match status" value="1"/>
</dbReference>
<dbReference type="FunFam" id="2.10.25.10:FF:000200">
    <property type="entry name" value="netrin-4 isoform X1"/>
    <property type="match status" value="1"/>
</dbReference>
<dbReference type="FunFam" id="2.40.50.120:FF:000002">
    <property type="entry name" value="netrin-4 isoform X1"/>
    <property type="match status" value="1"/>
</dbReference>
<dbReference type="FunFam" id="2.60.120.260:FF:000048">
    <property type="entry name" value="netrin-4 isoform X1"/>
    <property type="match status" value="1"/>
</dbReference>
<dbReference type="FunFam" id="2.10.25.10:FF:000333">
    <property type="entry name" value="netrin-4 isoform X2"/>
    <property type="match status" value="1"/>
</dbReference>
<dbReference type="Gene3D" id="2.40.50.120">
    <property type="match status" value="1"/>
</dbReference>
<dbReference type="Gene3D" id="2.60.120.260">
    <property type="entry name" value="Galactose-binding domain-like"/>
    <property type="match status" value="1"/>
</dbReference>
<dbReference type="Gene3D" id="2.10.25.10">
    <property type="entry name" value="Laminin"/>
    <property type="match status" value="1"/>
</dbReference>
<dbReference type="Gene3D" id="2.170.300.10">
    <property type="entry name" value="Tie2 ligand-binding domain superfamily"/>
    <property type="match status" value="1"/>
</dbReference>
<dbReference type="InterPro" id="IPR050440">
    <property type="entry name" value="Laminin/Netrin_ECM"/>
</dbReference>
<dbReference type="InterPro" id="IPR008211">
    <property type="entry name" value="Laminin_N"/>
</dbReference>
<dbReference type="InterPro" id="IPR002049">
    <property type="entry name" value="LE_dom"/>
</dbReference>
<dbReference type="InterPro" id="IPR056863">
    <property type="entry name" value="LMN_ATRN_NET-like_EGF"/>
</dbReference>
<dbReference type="InterPro" id="IPR035811">
    <property type="entry name" value="Netrin-4_NTR"/>
</dbReference>
<dbReference type="InterPro" id="IPR001134">
    <property type="entry name" value="Netrin_domain"/>
</dbReference>
<dbReference type="InterPro" id="IPR018933">
    <property type="entry name" value="Netrin_module_non-TIMP"/>
</dbReference>
<dbReference type="InterPro" id="IPR008993">
    <property type="entry name" value="TIMP-like_OB-fold"/>
</dbReference>
<dbReference type="PANTHER" id="PTHR10574:SF282">
    <property type="entry name" value="NETRIN-4"/>
    <property type="match status" value="1"/>
</dbReference>
<dbReference type="PANTHER" id="PTHR10574">
    <property type="entry name" value="NETRIN/LAMININ-RELATED"/>
    <property type="match status" value="1"/>
</dbReference>
<dbReference type="Pfam" id="PF00053">
    <property type="entry name" value="EGF_laminin"/>
    <property type="match status" value="2"/>
</dbReference>
<dbReference type="Pfam" id="PF24973">
    <property type="entry name" value="EGF_LMN_ATRN"/>
    <property type="match status" value="1"/>
</dbReference>
<dbReference type="Pfam" id="PF00055">
    <property type="entry name" value="Laminin_N"/>
    <property type="match status" value="1"/>
</dbReference>
<dbReference type="Pfam" id="PF01759">
    <property type="entry name" value="NTR"/>
    <property type="match status" value="1"/>
</dbReference>
<dbReference type="PRINTS" id="PR00011">
    <property type="entry name" value="EGFLAMININ"/>
</dbReference>
<dbReference type="SMART" id="SM00643">
    <property type="entry name" value="C345C"/>
    <property type="match status" value="1"/>
</dbReference>
<dbReference type="SMART" id="SM00180">
    <property type="entry name" value="EGF_Lam"/>
    <property type="match status" value="3"/>
</dbReference>
<dbReference type="SMART" id="SM00136">
    <property type="entry name" value="LamNT"/>
    <property type="match status" value="1"/>
</dbReference>
<dbReference type="SUPFAM" id="SSF57196">
    <property type="entry name" value="EGF/Laminin"/>
    <property type="match status" value="3"/>
</dbReference>
<dbReference type="SUPFAM" id="SSF50242">
    <property type="entry name" value="TIMP-like"/>
    <property type="match status" value="1"/>
</dbReference>
<dbReference type="PROSITE" id="PS00022">
    <property type="entry name" value="EGF_1"/>
    <property type="match status" value="2"/>
</dbReference>
<dbReference type="PROSITE" id="PS01248">
    <property type="entry name" value="EGF_LAM_1"/>
    <property type="match status" value="2"/>
</dbReference>
<dbReference type="PROSITE" id="PS50027">
    <property type="entry name" value="EGF_LAM_2"/>
    <property type="match status" value="3"/>
</dbReference>
<dbReference type="PROSITE" id="PS51117">
    <property type="entry name" value="LAMININ_NTER"/>
    <property type="match status" value="1"/>
</dbReference>
<dbReference type="PROSITE" id="PS50189">
    <property type="entry name" value="NTR"/>
    <property type="match status" value="1"/>
</dbReference>
<comment type="function">
    <text evidence="7">May play an important role in neural, kidney and vascular development. Promotes neurite elongation from olfactory bulb explants.</text>
</comment>
<comment type="subunit">
    <text>May form a homodimer.</text>
</comment>
<comment type="interaction">
    <interactant intactId="EBI-15755373">
        <id>Q9JI33</id>
    </interactant>
    <interactant intactId="EBI-7059830">
        <id>P02468</id>
        <label>Lamc1</label>
    </interactant>
    <organismsDiffer>false</organismsDiffer>
    <experiments>2</experiments>
</comment>
<comment type="subcellular location">
    <subcellularLocation>
        <location>Secreted</location>
        <location>Extracellular space</location>
        <location>Extracellular matrix</location>
        <location>Basement membrane</location>
    </subcellularLocation>
    <text>Major component.</text>
</comment>
<comment type="tissue specificity">
    <text evidence="6 7">Expressed in kidney, liver, heart, ovary, testis, retina, brain, olfactory bulb, and widely expressed in embryo.</text>
</comment>
<accession>Q9JI33</accession>
<accession>E9QMT3</accession>
<name>NET4_MOUSE</name>
<organism>
    <name type="scientific">Mus musculus</name>
    <name type="common">Mouse</name>
    <dbReference type="NCBI Taxonomy" id="10090"/>
    <lineage>
        <taxon>Eukaryota</taxon>
        <taxon>Metazoa</taxon>
        <taxon>Chordata</taxon>
        <taxon>Craniata</taxon>
        <taxon>Vertebrata</taxon>
        <taxon>Euteleostomi</taxon>
        <taxon>Mammalia</taxon>
        <taxon>Eutheria</taxon>
        <taxon>Euarchontoglires</taxon>
        <taxon>Glires</taxon>
        <taxon>Rodentia</taxon>
        <taxon>Myomorpha</taxon>
        <taxon>Muroidea</taxon>
        <taxon>Muridae</taxon>
        <taxon>Murinae</taxon>
        <taxon>Mus</taxon>
        <taxon>Mus</taxon>
    </lineage>
</organism>
<proteinExistence type="evidence at protein level"/>
<protein>
    <recommendedName>
        <fullName>Netrin-4</fullName>
    </recommendedName>
    <alternativeName>
        <fullName>Beta-netrin</fullName>
    </alternativeName>
</protein>